<comment type="function">
    <text evidence="1">Catalyzes the oxidative phosphorylation of glyceraldehyde 3-phosphate (G3P) to 1,3-bisphosphoglycerate (BPG) using the cofactor NAD. The first reaction step involves the formation of a hemiacetal intermediate between G3P and a cysteine residue, and this hemiacetal intermediate is then oxidized to a thioester, with concomitant reduction of NAD to NADH. The reduced NADH is then exchanged with the second NAD, and the thioester is attacked by a nucleophilic inorganic phosphate to produce BPG.</text>
</comment>
<comment type="catalytic activity">
    <reaction evidence="1">
        <text>D-glyceraldehyde 3-phosphate + phosphate + NAD(+) = (2R)-3-phospho-glyceroyl phosphate + NADH + H(+)</text>
        <dbReference type="Rhea" id="RHEA:10300"/>
        <dbReference type="ChEBI" id="CHEBI:15378"/>
        <dbReference type="ChEBI" id="CHEBI:43474"/>
        <dbReference type="ChEBI" id="CHEBI:57540"/>
        <dbReference type="ChEBI" id="CHEBI:57604"/>
        <dbReference type="ChEBI" id="CHEBI:57945"/>
        <dbReference type="ChEBI" id="CHEBI:59776"/>
        <dbReference type="EC" id="1.2.1.12"/>
    </reaction>
</comment>
<comment type="pathway">
    <text evidence="2">Carbohydrate degradation; glycolysis; pyruvate from D-glyceraldehyde 3-phosphate: step 1/5.</text>
</comment>
<comment type="subunit">
    <text evidence="1">Homotetramer.</text>
</comment>
<comment type="subcellular location">
    <subcellularLocation>
        <location evidence="2">Cytoplasm</location>
    </subcellularLocation>
</comment>
<comment type="similarity">
    <text evidence="2">Belongs to the glyceraldehyde-3-phosphate dehydrogenase family.</text>
</comment>
<evidence type="ECO:0000250" key="1">
    <source>
        <dbReference type="UniProtKB" id="P0A9B2"/>
    </source>
</evidence>
<evidence type="ECO:0000305" key="2"/>
<dbReference type="EC" id="1.2.1.12" evidence="1"/>
<dbReference type="EMBL" id="U33064">
    <property type="protein sequence ID" value="AAA96747.1"/>
    <property type="molecule type" value="Genomic_DNA"/>
</dbReference>
<dbReference type="SMR" id="P51009"/>
<dbReference type="UniPathway" id="UPA00109">
    <property type="reaction ID" value="UER00184"/>
</dbReference>
<dbReference type="GO" id="GO:0005737">
    <property type="term" value="C:cytoplasm"/>
    <property type="evidence" value="ECO:0007669"/>
    <property type="project" value="UniProtKB-SubCell"/>
</dbReference>
<dbReference type="GO" id="GO:0004365">
    <property type="term" value="F:glyceraldehyde-3-phosphate dehydrogenase (NAD+) (phosphorylating) activity"/>
    <property type="evidence" value="ECO:0000250"/>
    <property type="project" value="UniProtKB"/>
</dbReference>
<dbReference type="GO" id="GO:0051287">
    <property type="term" value="F:NAD binding"/>
    <property type="evidence" value="ECO:0000250"/>
    <property type="project" value="UniProtKB"/>
</dbReference>
<dbReference type="GO" id="GO:0050661">
    <property type="term" value="F:NADP binding"/>
    <property type="evidence" value="ECO:0007669"/>
    <property type="project" value="InterPro"/>
</dbReference>
<dbReference type="GO" id="GO:0006006">
    <property type="term" value="P:glucose metabolic process"/>
    <property type="evidence" value="ECO:0007669"/>
    <property type="project" value="InterPro"/>
</dbReference>
<dbReference type="GO" id="GO:0006096">
    <property type="term" value="P:glycolytic process"/>
    <property type="evidence" value="ECO:0007669"/>
    <property type="project" value="UniProtKB-UniPathway"/>
</dbReference>
<dbReference type="CDD" id="cd18126">
    <property type="entry name" value="GAPDH_I_C"/>
    <property type="match status" value="1"/>
</dbReference>
<dbReference type="CDD" id="cd05214">
    <property type="entry name" value="GAPDH_I_N"/>
    <property type="match status" value="1"/>
</dbReference>
<dbReference type="FunFam" id="3.30.360.10:FF:000002">
    <property type="entry name" value="Glyceraldehyde-3-phosphate dehydrogenase"/>
    <property type="match status" value="1"/>
</dbReference>
<dbReference type="FunFam" id="3.40.50.720:FF:000001">
    <property type="entry name" value="Glyceraldehyde-3-phosphate dehydrogenase"/>
    <property type="match status" value="1"/>
</dbReference>
<dbReference type="Gene3D" id="3.30.360.10">
    <property type="entry name" value="Dihydrodipicolinate Reductase, domain 2"/>
    <property type="match status" value="1"/>
</dbReference>
<dbReference type="Gene3D" id="3.40.50.720">
    <property type="entry name" value="NAD(P)-binding Rossmann-like Domain"/>
    <property type="match status" value="1"/>
</dbReference>
<dbReference type="InterPro" id="IPR020831">
    <property type="entry name" value="GlycerAld/Erythrose_P_DH"/>
</dbReference>
<dbReference type="InterPro" id="IPR020830">
    <property type="entry name" value="GlycerAld_3-P_DH_AS"/>
</dbReference>
<dbReference type="InterPro" id="IPR020829">
    <property type="entry name" value="GlycerAld_3-P_DH_cat"/>
</dbReference>
<dbReference type="InterPro" id="IPR020828">
    <property type="entry name" value="GlycerAld_3-P_DH_NAD(P)-bd"/>
</dbReference>
<dbReference type="InterPro" id="IPR006424">
    <property type="entry name" value="Glyceraldehyde-3-P_DH_1"/>
</dbReference>
<dbReference type="InterPro" id="IPR036291">
    <property type="entry name" value="NAD(P)-bd_dom_sf"/>
</dbReference>
<dbReference type="NCBIfam" id="TIGR01534">
    <property type="entry name" value="GAPDH-I"/>
    <property type="match status" value="1"/>
</dbReference>
<dbReference type="PANTHER" id="PTHR43148">
    <property type="entry name" value="GLYCERALDEHYDE-3-PHOSPHATE DEHYDROGENASE 2"/>
    <property type="match status" value="1"/>
</dbReference>
<dbReference type="Pfam" id="PF02800">
    <property type="entry name" value="Gp_dh_C"/>
    <property type="match status" value="1"/>
</dbReference>
<dbReference type="Pfam" id="PF00044">
    <property type="entry name" value="Gp_dh_N"/>
    <property type="match status" value="1"/>
</dbReference>
<dbReference type="PIRSF" id="PIRSF000149">
    <property type="entry name" value="GAP_DH"/>
    <property type="match status" value="1"/>
</dbReference>
<dbReference type="PRINTS" id="PR00078">
    <property type="entry name" value="G3PDHDRGNASE"/>
</dbReference>
<dbReference type="SMART" id="SM00846">
    <property type="entry name" value="Gp_dh_N"/>
    <property type="match status" value="1"/>
</dbReference>
<dbReference type="SUPFAM" id="SSF55347">
    <property type="entry name" value="Glyceraldehyde-3-phosphate dehydrogenase-like, C-terminal domain"/>
    <property type="match status" value="1"/>
</dbReference>
<dbReference type="SUPFAM" id="SSF51735">
    <property type="entry name" value="NAD(P)-binding Rossmann-fold domains"/>
    <property type="match status" value="1"/>
</dbReference>
<dbReference type="PROSITE" id="PS00071">
    <property type="entry name" value="GAPDH"/>
    <property type="match status" value="1"/>
</dbReference>
<sequence>MSVKVAINGFGRIGRNVLRAIIESGRTDIEVVAINDLGPVETNAHLFRFDSVHGRFPGEVKVAGDTIDVGRGPIKVTAVRNPAELPHKELGVDIALECTGIFTSRDKAAAHLAAGAKRVLVSAPADGADLTVVYGVNHEKLTNEHLVVSNASCTTNCLAPVAKVLNDAVGIEKGFMTTIHAYTGDQPTLDTMHKDLYRARAAAMSMIPTSTGAAKAVGLVLPELAGKLDGTSIRVPTPNVSVIDLKFVAKRATSKEEINEAIIAAASQQLKGILGFTDQPNVSIDFNHNPNSSTFHLDQTKVMEGTLVRVLSWYDNEWGFSNRMSDTAVAMGKLG</sequence>
<gene>
    <name type="primary">gap</name>
</gene>
<name>G3P_XANFL</name>
<reference key="1">
    <citation type="journal article" date="1994" name="J. Bacteriol.">
        <title>The Calvin cycle enzyme phosphoglycerate kinase of Xanthobacter flavus required for autotrophic CO2 fixation is not encoded by the cbb operon.</title>
        <authorList>
            <person name="Meijer W.G."/>
        </authorList>
    </citation>
    <scope>NUCLEOTIDE SEQUENCE [GENOMIC DNA]</scope>
    <source>
        <strain>H4-14</strain>
    </source>
</reference>
<proteinExistence type="inferred from homology"/>
<protein>
    <recommendedName>
        <fullName evidence="1">Glyceraldehyde-3-phosphate dehydrogenase</fullName>
        <shortName evidence="1">GAPDH</shortName>
        <ecNumber evidence="1">1.2.1.12</ecNumber>
    </recommendedName>
    <alternativeName>
        <fullName evidence="1">NAD-dependent glyceraldehyde-3-phosphate dehydrogenase</fullName>
    </alternativeName>
</protein>
<organism>
    <name type="scientific">Xanthobacter flavus</name>
    <dbReference type="NCBI Taxonomy" id="281"/>
    <lineage>
        <taxon>Bacteria</taxon>
        <taxon>Pseudomonadati</taxon>
        <taxon>Pseudomonadota</taxon>
        <taxon>Alphaproteobacteria</taxon>
        <taxon>Hyphomicrobiales</taxon>
        <taxon>Xanthobacteraceae</taxon>
        <taxon>Xanthobacter</taxon>
    </lineage>
</organism>
<feature type="chain" id="PRO_0000145713" description="Glyceraldehyde-3-phosphate dehydrogenase">
    <location>
        <begin position="1"/>
        <end position="335"/>
    </location>
</feature>
<feature type="active site" description="Nucleophile" evidence="1">
    <location>
        <position position="153"/>
    </location>
</feature>
<feature type="binding site" evidence="1">
    <location>
        <begin position="12"/>
        <end position="13"/>
    </location>
    <ligand>
        <name>NAD(+)</name>
        <dbReference type="ChEBI" id="CHEBI:57540"/>
    </ligand>
</feature>
<feature type="binding site" evidence="1">
    <location>
        <position position="36"/>
    </location>
    <ligand>
        <name>NAD(+)</name>
        <dbReference type="ChEBI" id="CHEBI:57540"/>
    </ligand>
</feature>
<feature type="binding site" evidence="1">
    <location>
        <position position="80"/>
    </location>
    <ligand>
        <name>NAD(+)</name>
        <dbReference type="ChEBI" id="CHEBI:57540"/>
    </ligand>
</feature>
<feature type="binding site" evidence="1">
    <location>
        <position position="122"/>
    </location>
    <ligand>
        <name>NAD(+)</name>
        <dbReference type="ChEBI" id="CHEBI:57540"/>
    </ligand>
</feature>
<feature type="binding site" evidence="1">
    <location>
        <begin position="152"/>
        <end position="154"/>
    </location>
    <ligand>
        <name>D-glyceraldehyde 3-phosphate</name>
        <dbReference type="ChEBI" id="CHEBI:59776"/>
    </ligand>
</feature>
<feature type="binding site" evidence="1">
    <location>
        <position position="183"/>
    </location>
    <ligand>
        <name>D-glyceraldehyde 3-phosphate</name>
        <dbReference type="ChEBI" id="CHEBI:59776"/>
    </ligand>
</feature>
<feature type="binding site" evidence="1">
    <location>
        <position position="198"/>
    </location>
    <ligand>
        <name>D-glyceraldehyde 3-phosphate</name>
        <dbReference type="ChEBI" id="CHEBI:59776"/>
    </ligand>
</feature>
<feature type="binding site" evidence="1">
    <location>
        <begin position="211"/>
        <end position="212"/>
    </location>
    <ligand>
        <name>D-glyceraldehyde 3-phosphate</name>
        <dbReference type="ChEBI" id="CHEBI:59776"/>
    </ligand>
</feature>
<feature type="binding site" evidence="1">
    <location>
        <position position="234"/>
    </location>
    <ligand>
        <name>D-glyceraldehyde 3-phosphate</name>
        <dbReference type="ChEBI" id="CHEBI:59776"/>
    </ligand>
</feature>
<feature type="binding site" evidence="1">
    <location>
        <position position="316"/>
    </location>
    <ligand>
        <name>NAD(+)</name>
        <dbReference type="ChEBI" id="CHEBI:57540"/>
    </ligand>
</feature>
<feature type="site" description="Activates thiol group during catalysis" evidence="1">
    <location>
        <position position="180"/>
    </location>
</feature>
<accession>P51009</accession>
<keyword id="KW-0963">Cytoplasm</keyword>
<keyword id="KW-0324">Glycolysis</keyword>
<keyword id="KW-0520">NAD</keyword>
<keyword id="KW-0547">Nucleotide-binding</keyword>
<keyword id="KW-0560">Oxidoreductase</keyword>